<proteinExistence type="predicted"/>
<accession>P71080</accession>
<evidence type="ECO:0000255" key="1"/>
<dbReference type="EMBL" id="Z82044">
    <property type="protein sequence ID" value="CAB04810.1"/>
    <property type="molecule type" value="Genomic_DNA"/>
</dbReference>
<dbReference type="EMBL" id="AL009126">
    <property type="protein sequence ID" value="CAB12695.1"/>
    <property type="molecule type" value="Genomic_DNA"/>
</dbReference>
<dbReference type="PIR" id="E69815">
    <property type="entry name" value="E69815"/>
</dbReference>
<dbReference type="RefSeq" id="NP_388747.1">
    <property type="nucleotide sequence ID" value="NC_000964.3"/>
</dbReference>
<dbReference type="RefSeq" id="WP_009968853.1">
    <property type="nucleotide sequence ID" value="NC_000964.3"/>
</dbReference>
<dbReference type="SMR" id="P71080"/>
<dbReference type="FunCoup" id="P71080">
    <property type="interactions" value="150"/>
</dbReference>
<dbReference type="IntAct" id="P71080">
    <property type="interactions" value="7"/>
</dbReference>
<dbReference type="STRING" id="224308.BSU08670"/>
<dbReference type="PaxDb" id="224308-BSU08670"/>
<dbReference type="EnsemblBacteria" id="CAB12695">
    <property type="protein sequence ID" value="CAB12695"/>
    <property type="gene ID" value="BSU_08670"/>
</dbReference>
<dbReference type="GeneID" id="939220"/>
<dbReference type="KEGG" id="bsu:BSU08670"/>
<dbReference type="PATRIC" id="fig|224308.43.peg.907"/>
<dbReference type="eggNOG" id="ENOG50309PW">
    <property type="taxonomic scope" value="Bacteria"/>
</dbReference>
<dbReference type="InParanoid" id="P71080"/>
<dbReference type="OrthoDB" id="2942102at2"/>
<dbReference type="BioCyc" id="BSUB:BSU08670-MONOMER"/>
<dbReference type="Proteomes" id="UP000001570">
    <property type="component" value="Chromosome"/>
</dbReference>
<dbReference type="InterPro" id="IPR025572">
    <property type="entry name" value="YgaB"/>
</dbReference>
<dbReference type="Pfam" id="PF14182">
    <property type="entry name" value="YgaB"/>
    <property type="match status" value="1"/>
</dbReference>
<feature type="chain" id="PRO_0000049543" description="Uncharacterized protein YgaB">
    <location>
        <begin position="1"/>
        <end position="114"/>
    </location>
</feature>
<feature type="coiled-coil region" evidence="1">
    <location>
        <begin position="31"/>
        <end position="72"/>
    </location>
</feature>
<name>YGAB_BACSU</name>
<gene>
    <name type="primary">ygaB</name>
    <name type="ordered locus">BSU08670</name>
</gene>
<sequence length="114" mass="13542">MSQRVCFMEIEMIKGGNVYTFIRLKEEPMTEFEKLVSEQMKTMDKLLDLQSELDRCKQIEAELRHLERDARLRGIQAEIAVKRKHLADIQDMFQKQTEQVIRSYRSSEKPSSFV</sequence>
<organism>
    <name type="scientific">Bacillus subtilis (strain 168)</name>
    <dbReference type="NCBI Taxonomy" id="224308"/>
    <lineage>
        <taxon>Bacteria</taxon>
        <taxon>Bacillati</taxon>
        <taxon>Bacillota</taxon>
        <taxon>Bacilli</taxon>
        <taxon>Bacillales</taxon>
        <taxon>Bacillaceae</taxon>
        <taxon>Bacillus</taxon>
    </lineage>
</organism>
<keyword id="KW-0175">Coiled coil</keyword>
<keyword id="KW-1185">Reference proteome</keyword>
<protein>
    <recommendedName>
        <fullName>Uncharacterized protein YgaB</fullName>
    </recommendedName>
</protein>
<reference key="1">
    <citation type="journal article" date="1997" name="Microbiology">
        <title>The Bacillus subtilis 168 chromosome from sspE to katA.</title>
        <authorList>
            <person name="Cummings N.J."/>
            <person name="Connerton I.F."/>
        </authorList>
    </citation>
    <scope>NUCLEOTIDE SEQUENCE [GENOMIC DNA]</scope>
    <source>
        <strain>168</strain>
    </source>
</reference>
<reference key="2">
    <citation type="journal article" date="1997" name="Nature">
        <title>The complete genome sequence of the Gram-positive bacterium Bacillus subtilis.</title>
        <authorList>
            <person name="Kunst F."/>
            <person name="Ogasawara N."/>
            <person name="Moszer I."/>
            <person name="Albertini A.M."/>
            <person name="Alloni G."/>
            <person name="Azevedo V."/>
            <person name="Bertero M.G."/>
            <person name="Bessieres P."/>
            <person name="Bolotin A."/>
            <person name="Borchert S."/>
            <person name="Borriss R."/>
            <person name="Boursier L."/>
            <person name="Brans A."/>
            <person name="Braun M."/>
            <person name="Brignell S.C."/>
            <person name="Bron S."/>
            <person name="Brouillet S."/>
            <person name="Bruschi C.V."/>
            <person name="Caldwell B."/>
            <person name="Capuano V."/>
            <person name="Carter N.M."/>
            <person name="Choi S.-K."/>
            <person name="Codani J.-J."/>
            <person name="Connerton I.F."/>
            <person name="Cummings N.J."/>
            <person name="Daniel R.A."/>
            <person name="Denizot F."/>
            <person name="Devine K.M."/>
            <person name="Duesterhoeft A."/>
            <person name="Ehrlich S.D."/>
            <person name="Emmerson P.T."/>
            <person name="Entian K.-D."/>
            <person name="Errington J."/>
            <person name="Fabret C."/>
            <person name="Ferrari E."/>
            <person name="Foulger D."/>
            <person name="Fritz C."/>
            <person name="Fujita M."/>
            <person name="Fujita Y."/>
            <person name="Fuma S."/>
            <person name="Galizzi A."/>
            <person name="Galleron N."/>
            <person name="Ghim S.-Y."/>
            <person name="Glaser P."/>
            <person name="Goffeau A."/>
            <person name="Golightly E.J."/>
            <person name="Grandi G."/>
            <person name="Guiseppi G."/>
            <person name="Guy B.J."/>
            <person name="Haga K."/>
            <person name="Haiech J."/>
            <person name="Harwood C.R."/>
            <person name="Henaut A."/>
            <person name="Hilbert H."/>
            <person name="Holsappel S."/>
            <person name="Hosono S."/>
            <person name="Hullo M.-F."/>
            <person name="Itaya M."/>
            <person name="Jones L.-M."/>
            <person name="Joris B."/>
            <person name="Karamata D."/>
            <person name="Kasahara Y."/>
            <person name="Klaerr-Blanchard M."/>
            <person name="Klein C."/>
            <person name="Kobayashi Y."/>
            <person name="Koetter P."/>
            <person name="Koningstein G."/>
            <person name="Krogh S."/>
            <person name="Kumano M."/>
            <person name="Kurita K."/>
            <person name="Lapidus A."/>
            <person name="Lardinois S."/>
            <person name="Lauber J."/>
            <person name="Lazarevic V."/>
            <person name="Lee S.-M."/>
            <person name="Levine A."/>
            <person name="Liu H."/>
            <person name="Masuda S."/>
            <person name="Mauel C."/>
            <person name="Medigue C."/>
            <person name="Medina N."/>
            <person name="Mellado R.P."/>
            <person name="Mizuno M."/>
            <person name="Moestl D."/>
            <person name="Nakai S."/>
            <person name="Noback M."/>
            <person name="Noone D."/>
            <person name="O'Reilly M."/>
            <person name="Ogawa K."/>
            <person name="Ogiwara A."/>
            <person name="Oudega B."/>
            <person name="Park S.-H."/>
            <person name="Parro V."/>
            <person name="Pohl T.M."/>
            <person name="Portetelle D."/>
            <person name="Porwollik S."/>
            <person name="Prescott A.M."/>
            <person name="Presecan E."/>
            <person name="Pujic P."/>
            <person name="Purnelle B."/>
            <person name="Rapoport G."/>
            <person name="Rey M."/>
            <person name="Reynolds S."/>
            <person name="Rieger M."/>
            <person name="Rivolta C."/>
            <person name="Rocha E."/>
            <person name="Roche B."/>
            <person name="Rose M."/>
            <person name="Sadaie Y."/>
            <person name="Sato T."/>
            <person name="Scanlan E."/>
            <person name="Schleich S."/>
            <person name="Schroeter R."/>
            <person name="Scoffone F."/>
            <person name="Sekiguchi J."/>
            <person name="Sekowska A."/>
            <person name="Seror S.J."/>
            <person name="Serror P."/>
            <person name="Shin B.-S."/>
            <person name="Soldo B."/>
            <person name="Sorokin A."/>
            <person name="Tacconi E."/>
            <person name="Takagi T."/>
            <person name="Takahashi H."/>
            <person name="Takemaru K."/>
            <person name="Takeuchi M."/>
            <person name="Tamakoshi A."/>
            <person name="Tanaka T."/>
            <person name="Terpstra P."/>
            <person name="Tognoni A."/>
            <person name="Tosato V."/>
            <person name="Uchiyama S."/>
            <person name="Vandenbol M."/>
            <person name="Vannier F."/>
            <person name="Vassarotti A."/>
            <person name="Viari A."/>
            <person name="Wambutt R."/>
            <person name="Wedler E."/>
            <person name="Wedler H."/>
            <person name="Weitzenegger T."/>
            <person name="Winters P."/>
            <person name="Wipat A."/>
            <person name="Yamamoto H."/>
            <person name="Yamane K."/>
            <person name="Yasumoto K."/>
            <person name="Yata K."/>
            <person name="Yoshida K."/>
            <person name="Yoshikawa H.-F."/>
            <person name="Zumstein E."/>
            <person name="Yoshikawa H."/>
            <person name="Danchin A."/>
        </authorList>
    </citation>
    <scope>NUCLEOTIDE SEQUENCE [LARGE SCALE GENOMIC DNA]</scope>
    <source>
        <strain>168</strain>
    </source>
</reference>